<evidence type="ECO:0000250" key="1"/>
<evidence type="ECO:0000255" key="2">
    <source>
        <dbReference type="HAMAP-Rule" id="MF_00062"/>
    </source>
</evidence>
<dbReference type="EC" id="2.7.7.4" evidence="2"/>
<dbReference type="EMBL" id="CP000361">
    <property type="protein sequence ID" value="ABV68389.1"/>
    <property type="molecule type" value="Genomic_DNA"/>
</dbReference>
<dbReference type="RefSeq" id="WP_004511054.1">
    <property type="nucleotide sequence ID" value="NC_009850.1"/>
</dbReference>
<dbReference type="SMR" id="A8EWR6"/>
<dbReference type="STRING" id="367737.Abu_2175"/>
<dbReference type="GeneID" id="24304716"/>
<dbReference type="KEGG" id="abu:Abu_2175"/>
<dbReference type="eggNOG" id="COG2895">
    <property type="taxonomic scope" value="Bacteria"/>
</dbReference>
<dbReference type="HOGENOM" id="CLU_007265_5_2_7"/>
<dbReference type="UniPathway" id="UPA00140">
    <property type="reaction ID" value="UER00204"/>
</dbReference>
<dbReference type="Proteomes" id="UP000001136">
    <property type="component" value="Chromosome"/>
</dbReference>
<dbReference type="GO" id="GO:0005524">
    <property type="term" value="F:ATP binding"/>
    <property type="evidence" value="ECO:0007669"/>
    <property type="project" value="UniProtKB-KW"/>
</dbReference>
<dbReference type="GO" id="GO:0005525">
    <property type="term" value="F:GTP binding"/>
    <property type="evidence" value="ECO:0007669"/>
    <property type="project" value="UniProtKB-UniRule"/>
</dbReference>
<dbReference type="GO" id="GO:0003924">
    <property type="term" value="F:GTPase activity"/>
    <property type="evidence" value="ECO:0007669"/>
    <property type="project" value="InterPro"/>
</dbReference>
<dbReference type="GO" id="GO:0004781">
    <property type="term" value="F:sulfate adenylyltransferase (ATP) activity"/>
    <property type="evidence" value="ECO:0007669"/>
    <property type="project" value="UniProtKB-UniRule"/>
</dbReference>
<dbReference type="GO" id="GO:0070814">
    <property type="term" value="P:hydrogen sulfide biosynthetic process"/>
    <property type="evidence" value="ECO:0007669"/>
    <property type="project" value="UniProtKB-UniRule"/>
</dbReference>
<dbReference type="GO" id="GO:0000103">
    <property type="term" value="P:sulfate assimilation"/>
    <property type="evidence" value="ECO:0007669"/>
    <property type="project" value="UniProtKB-UniRule"/>
</dbReference>
<dbReference type="CDD" id="cd04166">
    <property type="entry name" value="CysN_ATPS"/>
    <property type="match status" value="1"/>
</dbReference>
<dbReference type="CDD" id="cd03695">
    <property type="entry name" value="CysN_NodQ_II"/>
    <property type="match status" value="1"/>
</dbReference>
<dbReference type="CDD" id="cd04095">
    <property type="entry name" value="CysN_NoDQ_III"/>
    <property type="match status" value="1"/>
</dbReference>
<dbReference type="FunFam" id="2.40.30.10:FF:000027">
    <property type="entry name" value="Sulfate adenylyltransferase subunit 1"/>
    <property type="match status" value="1"/>
</dbReference>
<dbReference type="FunFam" id="3.40.50.300:FF:000119">
    <property type="entry name" value="Sulfate adenylyltransferase subunit 1"/>
    <property type="match status" value="1"/>
</dbReference>
<dbReference type="Gene3D" id="3.40.50.300">
    <property type="entry name" value="P-loop containing nucleotide triphosphate hydrolases"/>
    <property type="match status" value="1"/>
</dbReference>
<dbReference type="Gene3D" id="2.40.30.10">
    <property type="entry name" value="Translation factors"/>
    <property type="match status" value="2"/>
</dbReference>
<dbReference type="HAMAP" id="MF_00062">
    <property type="entry name" value="Sulf_adenylyltr_sub1"/>
    <property type="match status" value="1"/>
</dbReference>
<dbReference type="InterPro" id="IPR041757">
    <property type="entry name" value="CysN_GTP-bd"/>
</dbReference>
<dbReference type="InterPro" id="IPR044138">
    <property type="entry name" value="CysN_II"/>
</dbReference>
<dbReference type="InterPro" id="IPR044139">
    <property type="entry name" value="CysN_NoDQ_III"/>
</dbReference>
<dbReference type="InterPro" id="IPR031157">
    <property type="entry name" value="G_TR_CS"/>
</dbReference>
<dbReference type="InterPro" id="IPR054696">
    <property type="entry name" value="GTP-eEF1A_C"/>
</dbReference>
<dbReference type="InterPro" id="IPR027417">
    <property type="entry name" value="P-loop_NTPase"/>
</dbReference>
<dbReference type="InterPro" id="IPR005225">
    <property type="entry name" value="Small_GTP-bd"/>
</dbReference>
<dbReference type="InterPro" id="IPR011779">
    <property type="entry name" value="SO4_adenylTrfase_lsu"/>
</dbReference>
<dbReference type="InterPro" id="IPR000795">
    <property type="entry name" value="T_Tr_GTP-bd_dom"/>
</dbReference>
<dbReference type="InterPro" id="IPR050100">
    <property type="entry name" value="TRAFAC_GTPase_members"/>
</dbReference>
<dbReference type="InterPro" id="IPR009000">
    <property type="entry name" value="Transl_B-barrel_sf"/>
</dbReference>
<dbReference type="InterPro" id="IPR009001">
    <property type="entry name" value="Transl_elong_EF1A/Init_IF2_C"/>
</dbReference>
<dbReference type="NCBIfam" id="TIGR02034">
    <property type="entry name" value="CysN"/>
    <property type="match status" value="1"/>
</dbReference>
<dbReference type="NCBIfam" id="NF003478">
    <property type="entry name" value="PRK05124.1"/>
    <property type="match status" value="1"/>
</dbReference>
<dbReference type="NCBIfam" id="NF004035">
    <property type="entry name" value="PRK05506.1"/>
    <property type="match status" value="1"/>
</dbReference>
<dbReference type="NCBIfam" id="TIGR00231">
    <property type="entry name" value="small_GTP"/>
    <property type="match status" value="1"/>
</dbReference>
<dbReference type="PANTHER" id="PTHR23115">
    <property type="entry name" value="TRANSLATION FACTOR"/>
    <property type="match status" value="1"/>
</dbReference>
<dbReference type="Pfam" id="PF22594">
    <property type="entry name" value="GTP-eEF1A_C"/>
    <property type="match status" value="1"/>
</dbReference>
<dbReference type="Pfam" id="PF00009">
    <property type="entry name" value="GTP_EFTU"/>
    <property type="match status" value="1"/>
</dbReference>
<dbReference type="PRINTS" id="PR00315">
    <property type="entry name" value="ELONGATNFCT"/>
</dbReference>
<dbReference type="SUPFAM" id="SSF50465">
    <property type="entry name" value="EF-Tu/eEF-1alpha/eIF2-gamma C-terminal domain"/>
    <property type="match status" value="1"/>
</dbReference>
<dbReference type="SUPFAM" id="SSF52540">
    <property type="entry name" value="P-loop containing nucleoside triphosphate hydrolases"/>
    <property type="match status" value="1"/>
</dbReference>
<dbReference type="SUPFAM" id="SSF50447">
    <property type="entry name" value="Translation proteins"/>
    <property type="match status" value="1"/>
</dbReference>
<dbReference type="PROSITE" id="PS00301">
    <property type="entry name" value="G_TR_1"/>
    <property type="match status" value="1"/>
</dbReference>
<dbReference type="PROSITE" id="PS51722">
    <property type="entry name" value="G_TR_2"/>
    <property type="match status" value="1"/>
</dbReference>
<keyword id="KW-0067">ATP-binding</keyword>
<keyword id="KW-0342">GTP-binding</keyword>
<keyword id="KW-0547">Nucleotide-binding</keyword>
<keyword id="KW-0548">Nucleotidyltransferase</keyword>
<keyword id="KW-1185">Reference proteome</keyword>
<keyword id="KW-0808">Transferase</keyword>
<organism>
    <name type="scientific">Aliarcobacter butzleri (strain RM4018)</name>
    <name type="common">Arcobacter butzleri</name>
    <dbReference type="NCBI Taxonomy" id="367737"/>
    <lineage>
        <taxon>Bacteria</taxon>
        <taxon>Pseudomonadati</taxon>
        <taxon>Campylobacterota</taxon>
        <taxon>Epsilonproteobacteria</taxon>
        <taxon>Campylobacterales</taxon>
        <taxon>Arcobacteraceae</taxon>
        <taxon>Aliarcobacter</taxon>
    </lineage>
</organism>
<comment type="function">
    <text evidence="2">With CysD forms the ATP sulfurylase (ATPS) that catalyzes the adenylation of sulfate producing adenosine 5'-phosphosulfate (APS) and diphosphate, the first enzymatic step in sulfur assimilation pathway. APS synthesis involves the formation of a high-energy phosphoric-sulfuric acid anhydride bond driven by GTP hydrolysis by CysN coupled to ATP hydrolysis by CysD.</text>
</comment>
<comment type="catalytic activity">
    <reaction evidence="2">
        <text>sulfate + ATP + H(+) = adenosine 5'-phosphosulfate + diphosphate</text>
        <dbReference type="Rhea" id="RHEA:18133"/>
        <dbReference type="ChEBI" id="CHEBI:15378"/>
        <dbReference type="ChEBI" id="CHEBI:16189"/>
        <dbReference type="ChEBI" id="CHEBI:30616"/>
        <dbReference type="ChEBI" id="CHEBI:33019"/>
        <dbReference type="ChEBI" id="CHEBI:58243"/>
        <dbReference type="EC" id="2.7.7.4"/>
    </reaction>
</comment>
<comment type="pathway">
    <text evidence="2">Sulfur metabolism; hydrogen sulfide biosynthesis; sulfite from sulfate: step 1/3.</text>
</comment>
<comment type="subunit">
    <text evidence="2">Heterodimer composed of CysD, the smaller subunit, and CysN.</text>
</comment>
<comment type="similarity">
    <text evidence="2">Belongs to the TRAFAC class translation factor GTPase superfamily. Classic translation factor GTPase family. CysN/NodQ subfamily.</text>
</comment>
<proteinExistence type="inferred from homology"/>
<protein>
    <recommendedName>
        <fullName evidence="2">Sulfate adenylyltransferase subunit 1</fullName>
        <ecNumber evidence="2">2.7.7.4</ecNumber>
    </recommendedName>
    <alternativeName>
        <fullName evidence="2">ATP-sulfurylase large subunit</fullName>
    </alternativeName>
    <alternativeName>
        <fullName evidence="2">Sulfate adenylate transferase</fullName>
        <shortName evidence="2">SAT</shortName>
    </alternativeName>
</protein>
<sequence>MSDLENKIATDIESYLKEHENKQLLRFITCGSVDDGKSTLIGRLLHDSKMIFEDQLAAIKKDSKKVGTTEGEFDLALLVDGLQSEREQGITIDVAYRYFTTDKRKFIIADTPGHEQYTRNMATGASTADLAIILIDARYGVQTQTRRHSFITKLLGIKHIVVAVNKMDLVDFKEDIFNQISSDYLKFAQELGMTKDITLIPISALNGDNIVKRSEKSPWYKGDTLMNLLETIKIDEDRDLVHFRFPVQYVNRPNLNFRGFCGTIASGVIKVGDAITVLPSGKSSTVKEIVTYDGNLDYAYSQQAITLTLNDEIDISRGDIIVKSDEQPDHASNLDVDIVWMSEEPLIKGKQYFIKRATTVTVGSIDHFYYKTDVNTLEQSEANVLNLNEISRAKLDLEQVIAFDSYDKNKVMGSFIIIDRITNNTVGAGMIRNKSEDQSKKDSIYSDFEIEFNALVRKHFPHWECKEIF</sequence>
<reference key="1">
    <citation type="journal article" date="2007" name="PLoS ONE">
        <title>The complete genome sequence and analysis of the Epsilonproteobacterium Arcobacter butzleri.</title>
        <authorList>
            <person name="Miller W.G."/>
            <person name="Parker C.T."/>
            <person name="Rubenfield M."/>
            <person name="Mendz G.L."/>
            <person name="Woesten M.M.S.M."/>
            <person name="Ussery D.W."/>
            <person name="Stolz J.F."/>
            <person name="Binnewies T.T."/>
            <person name="Hallin P.F."/>
            <person name="Wang G."/>
            <person name="Malek J.A."/>
            <person name="Rogosin A."/>
            <person name="Stanker L.H."/>
            <person name="Mandrell R.E."/>
        </authorList>
    </citation>
    <scope>NUCLEOTIDE SEQUENCE [LARGE SCALE GENOMIC DNA]</scope>
    <source>
        <strain>RM4018</strain>
    </source>
</reference>
<name>CYSN_ALIB4</name>
<accession>A8EWR6</accession>
<feature type="chain" id="PRO_1000092132" description="Sulfate adenylyltransferase subunit 1">
    <location>
        <begin position="1"/>
        <end position="469"/>
    </location>
</feature>
<feature type="domain" description="tr-type G">
    <location>
        <begin position="22"/>
        <end position="238"/>
    </location>
</feature>
<feature type="region of interest" description="G1" evidence="1">
    <location>
        <begin position="31"/>
        <end position="38"/>
    </location>
</feature>
<feature type="region of interest" description="G2" evidence="1">
    <location>
        <begin position="89"/>
        <end position="93"/>
    </location>
</feature>
<feature type="region of interest" description="G3" evidence="1">
    <location>
        <begin position="110"/>
        <end position="113"/>
    </location>
</feature>
<feature type="region of interest" description="G4" evidence="1">
    <location>
        <begin position="165"/>
        <end position="168"/>
    </location>
</feature>
<feature type="region of interest" description="G5" evidence="1">
    <location>
        <begin position="203"/>
        <end position="205"/>
    </location>
</feature>
<feature type="binding site" evidence="2">
    <location>
        <begin position="31"/>
        <end position="38"/>
    </location>
    <ligand>
        <name>GTP</name>
        <dbReference type="ChEBI" id="CHEBI:37565"/>
    </ligand>
</feature>
<feature type="binding site" evidence="2">
    <location>
        <begin position="110"/>
        <end position="114"/>
    </location>
    <ligand>
        <name>GTP</name>
        <dbReference type="ChEBI" id="CHEBI:37565"/>
    </ligand>
</feature>
<feature type="binding site" evidence="2">
    <location>
        <begin position="165"/>
        <end position="168"/>
    </location>
    <ligand>
        <name>GTP</name>
        <dbReference type="ChEBI" id="CHEBI:37565"/>
    </ligand>
</feature>
<gene>
    <name evidence="2" type="primary">cysN</name>
    <name type="ordered locus">Abu_2175</name>
</gene>